<evidence type="ECO:0000255" key="1">
    <source>
        <dbReference type="HAMAP-Rule" id="MF_04071"/>
    </source>
</evidence>
<dbReference type="EC" id="3.2.1.18" evidence="1"/>
<dbReference type="EMBL" id="M30639">
    <property type="protein sequence ID" value="AAA43747.1"/>
    <property type="molecule type" value="Genomic_RNA"/>
</dbReference>
<dbReference type="PIR" id="D46347">
    <property type="entry name" value="D46347"/>
</dbReference>
<dbReference type="SMR" id="P16207"/>
<dbReference type="BindingDB" id="P16207"/>
<dbReference type="DrugCentral" id="P16207"/>
<dbReference type="CAZy" id="GH34">
    <property type="family name" value="Glycoside Hydrolase Family 34"/>
</dbReference>
<dbReference type="GlyCosmos" id="P16207">
    <property type="glycosylation" value="5 sites, No reported glycans"/>
</dbReference>
<dbReference type="GO" id="GO:0020002">
    <property type="term" value="C:host cell plasma membrane"/>
    <property type="evidence" value="ECO:0007669"/>
    <property type="project" value="UniProtKB-SubCell"/>
</dbReference>
<dbReference type="GO" id="GO:0016020">
    <property type="term" value="C:membrane"/>
    <property type="evidence" value="ECO:0007669"/>
    <property type="project" value="UniProtKB-UniRule"/>
</dbReference>
<dbReference type="GO" id="GO:0055036">
    <property type="term" value="C:virion membrane"/>
    <property type="evidence" value="ECO:0007669"/>
    <property type="project" value="UniProtKB-SubCell"/>
</dbReference>
<dbReference type="GO" id="GO:0004308">
    <property type="term" value="F:exo-alpha-sialidase activity"/>
    <property type="evidence" value="ECO:0007669"/>
    <property type="project" value="UniProtKB-UniRule"/>
</dbReference>
<dbReference type="GO" id="GO:0046872">
    <property type="term" value="F:metal ion binding"/>
    <property type="evidence" value="ECO:0007669"/>
    <property type="project" value="UniProtKB-UniRule"/>
</dbReference>
<dbReference type="GO" id="GO:0005975">
    <property type="term" value="P:carbohydrate metabolic process"/>
    <property type="evidence" value="ECO:0007669"/>
    <property type="project" value="InterPro"/>
</dbReference>
<dbReference type="GO" id="GO:0046761">
    <property type="term" value="P:viral budding from plasma membrane"/>
    <property type="evidence" value="ECO:0007669"/>
    <property type="project" value="UniProtKB-UniRule"/>
</dbReference>
<dbReference type="CDD" id="cd15483">
    <property type="entry name" value="Influenza_NA"/>
    <property type="match status" value="1"/>
</dbReference>
<dbReference type="Gene3D" id="2.120.10.10">
    <property type="match status" value="1"/>
</dbReference>
<dbReference type="HAMAP" id="MF_04071">
    <property type="entry name" value="INFV_NRAM"/>
    <property type="match status" value="1"/>
</dbReference>
<dbReference type="InterPro" id="IPR001860">
    <property type="entry name" value="Glyco_hydro_34"/>
</dbReference>
<dbReference type="InterPro" id="IPR033654">
    <property type="entry name" value="Sialidase_Influenza_A/B"/>
</dbReference>
<dbReference type="InterPro" id="IPR036278">
    <property type="entry name" value="Sialidase_sf"/>
</dbReference>
<dbReference type="Pfam" id="PF00064">
    <property type="entry name" value="Neur"/>
    <property type="match status" value="1"/>
</dbReference>
<dbReference type="SUPFAM" id="SSF50939">
    <property type="entry name" value="Sialidases"/>
    <property type="match status" value="1"/>
</dbReference>
<keyword id="KW-0106">Calcium</keyword>
<keyword id="KW-1015">Disulfide bond</keyword>
<keyword id="KW-0325">Glycoprotein</keyword>
<keyword id="KW-0326">Glycosidase</keyword>
<keyword id="KW-1032">Host cell membrane</keyword>
<keyword id="KW-1043">Host membrane</keyword>
<keyword id="KW-0378">Hydrolase</keyword>
<keyword id="KW-0472">Membrane</keyword>
<keyword id="KW-0479">Metal-binding</keyword>
<keyword id="KW-0735">Signal-anchor</keyword>
<keyword id="KW-0812">Transmembrane</keyword>
<keyword id="KW-1133">Transmembrane helix</keyword>
<keyword id="KW-0946">Virion</keyword>
<name>NRAM_INBVI</name>
<reference key="1">
    <citation type="journal article" date="1990" name="Virology">
        <title>Antigenic, sequence, and crystal variation in influenza B neuraminidase.</title>
        <authorList>
            <person name="Air G.M."/>
            <person name="Laver W.G."/>
            <person name="Luo M."/>
            <person name="Stray S.J."/>
            <person name="Legrone G."/>
            <person name="Webster R.G."/>
        </authorList>
    </citation>
    <scope>NUCLEOTIDE SEQUENCE [GENOMIC RNA]</scope>
</reference>
<reference key="2">
    <citation type="journal article" date="2005" name="N. Engl. J. Med.">
        <title>Neuraminidase inhibitors for influenza.</title>
        <authorList>
            <person name="Moscona A."/>
        </authorList>
    </citation>
    <scope>REVIEW</scope>
</reference>
<accession>P16207</accession>
<protein>
    <recommendedName>
        <fullName evidence="1">Neuraminidase</fullName>
        <ecNumber evidence="1">3.2.1.18</ecNumber>
    </recommendedName>
</protein>
<sequence>MLPSTIQTLTLFLTSGGVLLSLYVSASLSYLLYSDILLKFSPKITAPTMTLDCTNASNVQAVNRSATKEMTFLLPEPEWTYPRLSCQGSTFQKALLISPHRFGEARGNSAPLIIREPFIACGPKECKHFALTHYAAQPGGYYNGTREDRNKLRHLISVKLGKIPTVENSIFHMAAWSGSACHDGREWTYIGVDGPDSNALIKIKYGEAYTDTYHSYANNILRTQESACNCIGGDCYLMITDGSASGISKCRFLKIREGRIIKEIFPTGRVEHTEECTCGFASNKTIECACRDNNYTAKRPFVKLNVETDTAEIRLMCTETYLDTPRPDDGSITGPCESNGDKGRGGIKGGFVHQRMASKIGRWYSRTMSKTERMGMELYVKYDGDPWTDSDALDPSGVMVSIKEPGWYSFGFEIKDKKCDVPCIGIEMVHDGGKKTWHSAATAIYCLMGSGQLLWDTVTGVDMAL</sequence>
<organism>
    <name type="scientific">Influenza B virus (strain B/Victoria/3/1985)</name>
    <dbReference type="NCBI Taxonomy" id="11547"/>
    <lineage>
        <taxon>Viruses</taxon>
        <taxon>Riboviria</taxon>
        <taxon>Orthornavirae</taxon>
        <taxon>Negarnaviricota</taxon>
        <taxon>Polyploviricotina</taxon>
        <taxon>Insthoviricetes</taxon>
        <taxon>Articulavirales</taxon>
        <taxon>Orthomyxoviridae</taxon>
        <taxon>Betainfluenzavirus</taxon>
        <taxon>Betainfluenzavirus influenzae</taxon>
        <taxon>Influenza B virus</taxon>
    </lineage>
</organism>
<proteinExistence type="inferred from homology"/>
<organismHost>
    <name type="scientific">Homo sapiens</name>
    <name type="common">Human</name>
    <dbReference type="NCBI Taxonomy" id="9606"/>
</organismHost>
<feature type="chain" id="PRO_0000078740" description="Neuraminidase">
    <location>
        <begin position="1"/>
        <end position="465"/>
    </location>
</feature>
<feature type="topological domain" description="Intravirion" evidence="1">
    <location>
        <begin position="1"/>
        <end position="11"/>
    </location>
</feature>
<feature type="transmembrane region" description="Helical" evidence="1">
    <location>
        <begin position="12"/>
        <end position="34"/>
    </location>
</feature>
<feature type="topological domain" description="Virion surface" evidence="1">
    <location>
        <begin position="35"/>
        <end position="465"/>
    </location>
</feature>
<feature type="region of interest" description="Involved in apical transport and lipid raft association" evidence="1">
    <location>
        <begin position="13"/>
        <end position="35"/>
    </location>
</feature>
<feature type="region of interest" description="Hypervariable stalk region" evidence="1">
    <location>
        <begin position="38"/>
        <end position="85"/>
    </location>
</feature>
<feature type="region of interest" description="Head of neuraminidase" evidence="1">
    <location>
        <begin position="88"/>
        <end position="465"/>
    </location>
</feature>
<feature type="active site" description="Proton donor/acceptor" evidence="1">
    <location>
        <position position="148"/>
    </location>
</feature>
<feature type="active site" description="Nucleophile" evidence="1">
    <location>
        <position position="408"/>
    </location>
</feature>
<feature type="binding site" evidence="1">
    <location>
        <position position="115"/>
    </location>
    <ligand>
        <name>substrate</name>
    </ligand>
</feature>
<feature type="binding site" evidence="1">
    <location>
        <position position="149"/>
    </location>
    <ligand>
        <name>substrate</name>
    </ligand>
</feature>
<feature type="binding site" evidence="1">
    <location>
        <begin position="274"/>
        <end position="275"/>
    </location>
    <ligand>
        <name>substrate</name>
    </ligand>
</feature>
<feature type="binding site" evidence="1">
    <location>
        <position position="291"/>
    </location>
    <ligand>
        <name>substrate</name>
    </ligand>
</feature>
<feature type="binding site" evidence="1">
    <location>
        <position position="292"/>
    </location>
    <ligand>
        <name>Ca(2+)</name>
        <dbReference type="ChEBI" id="CHEBI:29108"/>
    </ligand>
</feature>
<feature type="binding site" evidence="1">
    <location>
        <position position="323"/>
    </location>
    <ligand>
        <name>Ca(2+)</name>
        <dbReference type="ChEBI" id="CHEBI:29108"/>
    </ligand>
</feature>
<feature type="binding site" evidence="1">
    <location>
        <position position="373"/>
    </location>
    <ligand>
        <name>substrate</name>
    </ligand>
</feature>
<feature type="glycosylation site" description="N-linked (GlcNAc...) asparagine; by host" evidence="1">
    <location>
        <position position="55"/>
    </location>
</feature>
<feature type="glycosylation site" description="N-linked (GlcNAc...) asparagine; by host" evidence="1">
    <location>
        <position position="63"/>
    </location>
</feature>
<feature type="glycosylation site" description="N-linked (GlcNAc...) asparagine; by host" evidence="1">
    <location>
        <position position="143"/>
    </location>
</feature>
<feature type="glycosylation site" description="N-linked (GlcNAc...) asparagine; by host" evidence="1">
    <location>
        <position position="283"/>
    </location>
</feature>
<feature type="glycosylation site" description="N-linked (GlcNAc...) asparagine; by host" evidence="1">
    <location>
        <position position="294"/>
    </location>
</feature>
<feature type="disulfide bond" evidence="1">
    <location>
        <begin position="86"/>
        <end position="419"/>
    </location>
</feature>
<feature type="disulfide bond" evidence="1">
    <location>
        <begin position="121"/>
        <end position="126"/>
    </location>
</feature>
<feature type="disulfide bond" evidence="1">
    <location>
        <begin position="181"/>
        <end position="228"/>
    </location>
</feature>
<feature type="disulfide bond" evidence="1">
    <location>
        <begin position="230"/>
        <end position="235"/>
    </location>
</feature>
<feature type="disulfide bond" evidence="1">
    <location>
        <begin position="276"/>
        <end position="290"/>
    </location>
</feature>
<feature type="disulfide bond" evidence="1">
    <location>
        <begin position="278"/>
        <end position="288"/>
    </location>
</feature>
<feature type="disulfide bond" evidence="1">
    <location>
        <begin position="317"/>
        <end position="336"/>
    </location>
</feature>
<feature type="disulfide bond" evidence="1">
    <location>
        <begin position="423"/>
        <end position="446"/>
    </location>
</feature>
<gene>
    <name evidence="1" type="primary">NA</name>
</gene>
<comment type="function">
    <text evidence="1">Catalyzes the removal of terminal sialic acid residues from viral and cellular glycoconjugates. Cleaves off the terminal sialic acids on the glycosylated HA during virus budding to facilitate virus release. Additionally helps virus spread through the circulation by further removing sialic acids from the cell surface. These cleavages prevent self-aggregation and ensure the efficient spread of the progeny virus from cell to cell. Otherwise, infection would be limited to one round of replication. Described as a receptor-destroying enzyme because it cleaves a terminal sialic acid from the cellular receptors. May facilitate viral invasion of the upper airways by cleaving the sialic acid moieties on the mucin of the airway epithelial cells. Likely to plays a role in the budding process through its association with lipid rafts during intracellular transport. May additionally display a raft-association independent effect on budding. Plays a role in the determination of host range restriction on replication and virulence. Sialidase activity in late endosome/lysosome traffic seems to enhance virus replication.</text>
</comment>
<comment type="catalytic activity">
    <reaction evidence="1">
        <text>Hydrolysis of alpha-(2-&gt;3)-, alpha-(2-&gt;6)-, alpha-(2-&gt;8)- glycosidic linkages of terminal sialic acid residues in oligosaccharides, glycoproteins, glycolipids, colominic acid and synthetic substrates.</text>
        <dbReference type="EC" id="3.2.1.18"/>
    </reaction>
</comment>
<comment type="cofactor">
    <cofactor evidence="1">
        <name>Ca(2+)</name>
        <dbReference type="ChEBI" id="CHEBI:29108"/>
    </cofactor>
</comment>
<comment type="activity regulation">
    <text evidence="1">Inhibited by the neuraminidase inhibitors zanamivir (Relenza) and oseltamivir (Tamiflu). These drugs interfere with the release of progeny virus from infected cells and are effective against all influenza strains. Resistance to neuraminidase inhibitors is quite rare.</text>
</comment>
<comment type="subunit">
    <text evidence="1">Homotetramer.</text>
</comment>
<comment type="subcellular location">
    <subcellularLocation>
        <location evidence="1">Virion membrane</location>
    </subcellularLocation>
    <subcellularLocation>
        <location evidence="1">Host apical cell membrane</location>
        <topology evidence="1">Single-pass type II membrane protein</topology>
    </subcellularLocation>
    <text evidence="1">Preferentially accumulates at the apical plasma membrane in infected polarized epithelial cells, which is the virus assembly site. Uses lipid rafts for cell surface transport and apical sorting. In the virion, forms a mushroom-shaped spike on the surface of the membrane.</text>
</comment>
<comment type="domain">
    <text evidence="1">Intact N-terminus is essential for virion morphogenesis. Possesses two apical sorting signals, one in the ectodomain, which is likely to be a glycan, and the other in the transmembrane domain. The transmembrane domain also plays a role in lipid raft association.</text>
</comment>
<comment type="PTM">
    <text evidence="1">N-glycosylated.</text>
</comment>
<comment type="miscellaneous">
    <text>The influenza B genome consist of 8 RNA segments. Genetic variation of hemagglutinin and/or neuraminidase genes results in the emergence of new influenza strains. The mechanism of variation can be the result of point mutations or the result of genetic reassortment between segments of two different strains.</text>
</comment>
<comment type="similarity">
    <text evidence="1">Belongs to the glycosyl hydrolase 34 family.</text>
</comment>